<organism>
    <name type="scientific">Hydrogenobaculum sp. (strain Y04AAS1)</name>
    <dbReference type="NCBI Taxonomy" id="380749"/>
    <lineage>
        <taxon>Bacteria</taxon>
        <taxon>Pseudomonadati</taxon>
        <taxon>Aquificota</taxon>
        <taxon>Aquificia</taxon>
        <taxon>Aquificales</taxon>
        <taxon>Aquificaceae</taxon>
        <taxon>Hydrogenobaculum</taxon>
    </lineage>
</organism>
<protein>
    <recommendedName>
        <fullName evidence="1">ATP phosphoribosyltransferase</fullName>
        <shortName evidence="1">ATP-PRT</shortName>
        <shortName evidence="1">ATP-PRTase</shortName>
        <ecNumber evidence="1">2.4.2.17</ecNumber>
    </recommendedName>
</protein>
<proteinExistence type="inferred from homology"/>
<dbReference type="EC" id="2.4.2.17" evidence="1"/>
<dbReference type="EMBL" id="CP001130">
    <property type="protein sequence ID" value="ACG57319.1"/>
    <property type="molecule type" value="Genomic_DNA"/>
</dbReference>
<dbReference type="RefSeq" id="WP_012513675.1">
    <property type="nucleotide sequence ID" value="NC_011126.1"/>
</dbReference>
<dbReference type="SMR" id="B4U858"/>
<dbReference type="STRING" id="380749.HY04AAS1_0632"/>
<dbReference type="KEGG" id="hya:HY04AAS1_0632"/>
<dbReference type="eggNOG" id="COG0040">
    <property type="taxonomic scope" value="Bacteria"/>
</dbReference>
<dbReference type="HOGENOM" id="CLU_038115_2_0_0"/>
<dbReference type="OrthoDB" id="9801867at2"/>
<dbReference type="UniPathway" id="UPA00031">
    <property type="reaction ID" value="UER00006"/>
</dbReference>
<dbReference type="GO" id="GO:0005737">
    <property type="term" value="C:cytoplasm"/>
    <property type="evidence" value="ECO:0007669"/>
    <property type="project" value="UniProtKB-SubCell"/>
</dbReference>
<dbReference type="GO" id="GO:0005524">
    <property type="term" value="F:ATP binding"/>
    <property type="evidence" value="ECO:0007669"/>
    <property type="project" value="UniProtKB-KW"/>
</dbReference>
<dbReference type="GO" id="GO:0003879">
    <property type="term" value="F:ATP phosphoribosyltransferase activity"/>
    <property type="evidence" value="ECO:0007669"/>
    <property type="project" value="UniProtKB-UniRule"/>
</dbReference>
<dbReference type="GO" id="GO:0000105">
    <property type="term" value="P:L-histidine biosynthetic process"/>
    <property type="evidence" value="ECO:0007669"/>
    <property type="project" value="UniProtKB-UniRule"/>
</dbReference>
<dbReference type="CDD" id="cd13595">
    <property type="entry name" value="PBP2_HisGs"/>
    <property type="match status" value="1"/>
</dbReference>
<dbReference type="FunFam" id="3.40.190.10:FF:000008">
    <property type="entry name" value="ATP phosphoribosyltransferase"/>
    <property type="match status" value="1"/>
</dbReference>
<dbReference type="Gene3D" id="3.40.190.10">
    <property type="entry name" value="Periplasmic binding protein-like II"/>
    <property type="match status" value="2"/>
</dbReference>
<dbReference type="HAMAP" id="MF_01018">
    <property type="entry name" value="HisG_Short"/>
    <property type="match status" value="1"/>
</dbReference>
<dbReference type="InterPro" id="IPR013820">
    <property type="entry name" value="ATP_PRibTrfase_cat"/>
</dbReference>
<dbReference type="InterPro" id="IPR018198">
    <property type="entry name" value="ATP_PRibTrfase_CS"/>
</dbReference>
<dbReference type="InterPro" id="IPR001348">
    <property type="entry name" value="ATP_PRibTrfase_HisG"/>
</dbReference>
<dbReference type="InterPro" id="IPR024893">
    <property type="entry name" value="ATP_PRibTrfase_HisG_short"/>
</dbReference>
<dbReference type="NCBIfam" id="TIGR00070">
    <property type="entry name" value="hisG"/>
    <property type="match status" value="1"/>
</dbReference>
<dbReference type="PANTHER" id="PTHR21403:SF8">
    <property type="entry name" value="ATP PHOSPHORIBOSYLTRANSFERASE"/>
    <property type="match status" value="1"/>
</dbReference>
<dbReference type="PANTHER" id="PTHR21403">
    <property type="entry name" value="ATP PHOSPHORIBOSYLTRANSFERASE ATP-PRTASE"/>
    <property type="match status" value="1"/>
</dbReference>
<dbReference type="Pfam" id="PF01634">
    <property type="entry name" value="HisG"/>
    <property type="match status" value="1"/>
</dbReference>
<dbReference type="SUPFAM" id="SSF53850">
    <property type="entry name" value="Periplasmic binding protein-like II"/>
    <property type="match status" value="1"/>
</dbReference>
<dbReference type="PROSITE" id="PS01316">
    <property type="entry name" value="ATP_P_PHORIBOSYLTR"/>
    <property type="match status" value="1"/>
</dbReference>
<evidence type="ECO:0000255" key="1">
    <source>
        <dbReference type="HAMAP-Rule" id="MF_01018"/>
    </source>
</evidence>
<keyword id="KW-0028">Amino-acid biosynthesis</keyword>
<keyword id="KW-0067">ATP-binding</keyword>
<keyword id="KW-0963">Cytoplasm</keyword>
<keyword id="KW-0328">Glycosyltransferase</keyword>
<keyword id="KW-0368">Histidine biosynthesis</keyword>
<keyword id="KW-0547">Nucleotide-binding</keyword>
<keyword id="KW-0808">Transferase</keyword>
<sequence length="204" mass="22908">MLKIAIPKGRLLEEVSELFLSKSLIPSKIEESRKLIVDIDYFRFLIVKPSDVATYVEQGAADIGVVGLDVLKEEPKEIYEILDLKNIGKCSMVVAGKPEKLGDYKILHFTKVATKYVNIARSFFEGKDVSINIIKLNGSVEIAPIIGLSDYIVDITQTGKTLKENGLIVMEKIFDSHAKIICNKVAFRIKKYDIFKILDKLSDI</sequence>
<feature type="chain" id="PRO_1000135282" description="ATP phosphoribosyltransferase">
    <location>
        <begin position="1"/>
        <end position="204"/>
    </location>
</feature>
<gene>
    <name evidence="1" type="primary">hisG</name>
    <name type="ordered locus">HY04AAS1_0632</name>
</gene>
<comment type="function">
    <text evidence="1">Catalyzes the condensation of ATP and 5-phosphoribose 1-diphosphate to form N'-(5'-phosphoribosyl)-ATP (PR-ATP). Has a crucial role in the pathway because the rate of histidine biosynthesis seems to be controlled primarily by regulation of HisG enzymatic activity.</text>
</comment>
<comment type="catalytic activity">
    <reaction evidence="1">
        <text>1-(5-phospho-beta-D-ribosyl)-ATP + diphosphate = 5-phospho-alpha-D-ribose 1-diphosphate + ATP</text>
        <dbReference type="Rhea" id="RHEA:18473"/>
        <dbReference type="ChEBI" id="CHEBI:30616"/>
        <dbReference type="ChEBI" id="CHEBI:33019"/>
        <dbReference type="ChEBI" id="CHEBI:58017"/>
        <dbReference type="ChEBI" id="CHEBI:73183"/>
        <dbReference type="EC" id="2.4.2.17"/>
    </reaction>
</comment>
<comment type="pathway">
    <text evidence="1">Amino-acid biosynthesis; L-histidine biosynthesis; L-histidine from 5-phospho-alpha-D-ribose 1-diphosphate: step 1/9.</text>
</comment>
<comment type="subunit">
    <text evidence="1">Heteromultimer composed of HisG and HisZ subunits.</text>
</comment>
<comment type="subcellular location">
    <subcellularLocation>
        <location evidence="1">Cytoplasm</location>
    </subcellularLocation>
</comment>
<comment type="domain">
    <text>Lacks the C-terminal regulatory region which is replaced by HisZ.</text>
</comment>
<comment type="similarity">
    <text evidence="1">Belongs to the ATP phosphoribosyltransferase family. Short subfamily.</text>
</comment>
<accession>B4U858</accession>
<reference key="1">
    <citation type="journal article" date="2009" name="J. Bacteriol.">
        <title>Complete and draft genome sequences of six members of the Aquificales.</title>
        <authorList>
            <person name="Reysenbach A.-L."/>
            <person name="Hamamura N."/>
            <person name="Podar M."/>
            <person name="Griffiths E."/>
            <person name="Ferreira S."/>
            <person name="Hochstein R."/>
            <person name="Heidelberg J."/>
            <person name="Johnson J."/>
            <person name="Mead D."/>
            <person name="Pohorille A."/>
            <person name="Sarmiento M."/>
            <person name="Schweighofer K."/>
            <person name="Seshadri R."/>
            <person name="Voytek M.A."/>
        </authorList>
    </citation>
    <scope>NUCLEOTIDE SEQUENCE [LARGE SCALE GENOMIC DNA]</scope>
    <source>
        <strain>Y04AAS1</strain>
    </source>
</reference>
<name>HIS1_HYDS0</name>